<protein>
    <recommendedName>
        <fullName evidence="1">Ribosome-recycling factor</fullName>
        <shortName evidence="1">RRF</shortName>
    </recommendedName>
    <alternativeName>
        <fullName evidence="1">Ribosome-releasing factor</fullName>
    </alternativeName>
</protein>
<sequence length="185" mass="20927">MLNEIKAKTKERMLKTIQSFHDDIKGVRTGRASASLLDGIVVNIYGGHQKLNQVAGVSVIDNKTLSIKIWDINVVGEVKNAILNANLNLNPVVEGNTIRIALPDLTQETREKLVKLLHQFAENARIAIRNIRRDIMEETEKMKENKEISEDDFHGAKKEIQNITDNNIKKIDGELSIKEKDILNH</sequence>
<organism>
    <name type="scientific">Wolbachia sp. subsp. Drosophila simulans (strain wRi)</name>
    <dbReference type="NCBI Taxonomy" id="66084"/>
    <lineage>
        <taxon>Bacteria</taxon>
        <taxon>Pseudomonadati</taxon>
        <taxon>Pseudomonadota</taxon>
        <taxon>Alphaproteobacteria</taxon>
        <taxon>Rickettsiales</taxon>
        <taxon>Anaplasmataceae</taxon>
        <taxon>Wolbachieae</taxon>
        <taxon>Wolbachia</taxon>
    </lineage>
</organism>
<feature type="chain" id="PRO_1000117267" description="Ribosome-recycling factor">
    <location>
        <begin position="1"/>
        <end position="185"/>
    </location>
</feature>
<dbReference type="EMBL" id="CP001391">
    <property type="protein sequence ID" value="ACN95154.1"/>
    <property type="molecule type" value="Genomic_DNA"/>
</dbReference>
<dbReference type="RefSeq" id="WP_007549203.1">
    <property type="nucleotide sequence ID" value="NZ_MKIF01000165.1"/>
</dbReference>
<dbReference type="SMR" id="C0R2L2"/>
<dbReference type="STRING" id="66084.WRi_003430"/>
<dbReference type="KEGG" id="wri:WRi_003430"/>
<dbReference type="HOGENOM" id="CLU_073981_2_0_5"/>
<dbReference type="Proteomes" id="UP000001293">
    <property type="component" value="Chromosome"/>
</dbReference>
<dbReference type="GO" id="GO:0005829">
    <property type="term" value="C:cytosol"/>
    <property type="evidence" value="ECO:0007669"/>
    <property type="project" value="GOC"/>
</dbReference>
<dbReference type="GO" id="GO:0043023">
    <property type="term" value="F:ribosomal large subunit binding"/>
    <property type="evidence" value="ECO:0007669"/>
    <property type="project" value="TreeGrafter"/>
</dbReference>
<dbReference type="GO" id="GO:0002184">
    <property type="term" value="P:cytoplasmic translational termination"/>
    <property type="evidence" value="ECO:0007669"/>
    <property type="project" value="TreeGrafter"/>
</dbReference>
<dbReference type="CDD" id="cd00520">
    <property type="entry name" value="RRF"/>
    <property type="match status" value="1"/>
</dbReference>
<dbReference type="FunFam" id="1.10.132.20:FF:000001">
    <property type="entry name" value="Ribosome-recycling factor"/>
    <property type="match status" value="1"/>
</dbReference>
<dbReference type="FunFam" id="3.30.1360.40:FF:000001">
    <property type="entry name" value="Ribosome-recycling factor"/>
    <property type="match status" value="1"/>
</dbReference>
<dbReference type="Gene3D" id="3.30.1360.40">
    <property type="match status" value="1"/>
</dbReference>
<dbReference type="Gene3D" id="1.10.132.20">
    <property type="entry name" value="Ribosome-recycling factor"/>
    <property type="match status" value="1"/>
</dbReference>
<dbReference type="HAMAP" id="MF_00040">
    <property type="entry name" value="RRF"/>
    <property type="match status" value="1"/>
</dbReference>
<dbReference type="InterPro" id="IPR002661">
    <property type="entry name" value="Ribosome_recyc_fac"/>
</dbReference>
<dbReference type="InterPro" id="IPR023584">
    <property type="entry name" value="Ribosome_recyc_fac_dom"/>
</dbReference>
<dbReference type="InterPro" id="IPR036191">
    <property type="entry name" value="RRF_sf"/>
</dbReference>
<dbReference type="NCBIfam" id="TIGR00496">
    <property type="entry name" value="frr"/>
    <property type="match status" value="1"/>
</dbReference>
<dbReference type="PANTHER" id="PTHR20982:SF3">
    <property type="entry name" value="MITOCHONDRIAL RIBOSOME RECYCLING FACTOR PSEUDO 1"/>
    <property type="match status" value="1"/>
</dbReference>
<dbReference type="PANTHER" id="PTHR20982">
    <property type="entry name" value="RIBOSOME RECYCLING FACTOR"/>
    <property type="match status" value="1"/>
</dbReference>
<dbReference type="Pfam" id="PF01765">
    <property type="entry name" value="RRF"/>
    <property type="match status" value="1"/>
</dbReference>
<dbReference type="SUPFAM" id="SSF55194">
    <property type="entry name" value="Ribosome recycling factor, RRF"/>
    <property type="match status" value="1"/>
</dbReference>
<evidence type="ECO:0000255" key="1">
    <source>
        <dbReference type="HAMAP-Rule" id="MF_00040"/>
    </source>
</evidence>
<proteinExistence type="inferred from homology"/>
<keyword id="KW-0963">Cytoplasm</keyword>
<keyword id="KW-0648">Protein biosynthesis</keyword>
<reference key="1">
    <citation type="journal article" date="2009" name="Proc. Natl. Acad. Sci. U.S.A.">
        <title>The mosaic genome structure of the Wolbachia wRi strain infecting Drosophila simulans.</title>
        <authorList>
            <person name="Klasson L."/>
            <person name="Westberg J."/>
            <person name="Sapountzis P."/>
            <person name="Naeslund K."/>
            <person name="Lutnaes Y."/>
            <person name="Darby A.C."/>
            <person name="Veneti Z."/>
            <person name="Chen L."/>
            <person name="Braig H.R."/>
            <person name="Garrett R."/>
            <person name="Bourtzis K."/>
            <person name="Andersson S.G."/>
        </authorList>
    </citation>
    <scope>NUCLEOTIDE SEQUENCE [LARGE SCALE GENOMIC DNA]</scope>
    <source>
        <strain>wRi</strain>
    </source>
</reference>
<comment type="function">
    <text evidence="1">Responsible for the release of ribosomes from messenger RNA at the termination of protein biosynthesis. May increase the efficiency of translation by recycling ribosomes from one round of translation to another.</text>
</comment>
<comment type="subcellular location">
    <subcellularLocation>
        <location evidence="1">Cytoplasm</location>
    </subcellularLocation>
</comment>
<comment type="similarity">
    <text evidence="1">Belongs to the RRF family.</text>
</comment>
<name>RRF_WOLWR</name>
<accession>C0R2L2</accession>
<gene>
    <name evidence="1" type="primary">frr</name>
    <name type="ordered locus">WRi_003430</name>
</gene>